<protein>
    <recommendedName>
        <fullName>Uncharacterized 8.1 kDa protein</fullName>
    </recommendedName>
    <alternativeName>
        <fullName>ORF65</fullName>
    </alternativeName>
</protein>
<sequence>MKNDHYVFNFYFFRSKITSNHLIRLNTNYLKKTILFISSDIPETIYEKFYLQSFKLFIIYYNINL</sequence>
<dbReference type="EMBL" id="AF041468">
    <property type="protein sequence ID" value="AAC35606.1"/>
    <property type="molecule type" value="Genomic_DNA"/>
</dbReference>
<dbReference type="RefSeq" id="NP_050672.1">
    <property type="nucleotide sequence ID" value="NC_000926.1"/>
</dbReference>
<dbReference type="GeneID" id="1444455"/>
<dbReference type="HOGENOM" id="CLU_2854412_0_0_1"/>
<dbReference type="GO" id="GO:0009507">
    <property type="term" value="C:chloroplast"/>
    <property type="evidence" value="ECO:0007669"/>
    <property type="project" value="UniProtKB-SubCell"/>
</dbReference>
<name>YCX2_GUITH</name>
<reference key="1">
    <citation type="journal article" date="1999" name="J. Mol. Evol.">
        <title>The plastid genome of the cryptophyte alga, Guillardia theta: complete sequence and conserved synteny groups confirm its common ancestry with red algae.</title>
        <authorList>
            <person name="Douglas S.E."/>
            <person name="Penny S.L."/>
        </authorList>
    </citation>
    <scope>NUCLEOTIDE SEQUENCE [LARGE SCALE GENOMIC DNA]</scope>
</reference>
<accession>O78421</accession>
<feature type="chain" id="PRO_0000217443" description="Uncharacterized 8.1 kDa protein">
    <location>
        <begin position="1"/>
        <end position="65"/>
    </location>
</feature>
<geneLocation type="chloroplast"/>
<organism>
    <name type="scientific">Guillardia theta</name>
    <name type="common">Cryptophyte</name>
    <name type="synonym">Cryptomonas phi</name>
    <dbReference type="NCBI Taxonomy" id="55529"/>
    <lineage>
        <taxon>Eukaryota</taxon>
        <taxon>Cryptophyceae</taxon>
        <taxon>Pyrenomonadales</taxon>
        <taxon>Geminigeraceae</taxon>
        <taxon>Guillardia</taxon>
    </lineage>
</organism>
<comment type="subcellular location">
    <subcellularLocation>
        <location>Plastid</location>
        <location>Chloroplast</location>
    </subcellularLocation>
</comment>
<keyword id="KW-0150">Chloroplast</keyword>
<keyword id="KW-0934">Plastid</keyword>
<proteinExistence type="predicted"/>